<reference key="1">
    <citation type="journal article" date="2006" name="J. Bacteriol.">
        <title>Complete genome sequence of Yersinia pestis strains Antiqua and Nepal516: evidence of gene reduction in an emerging pathogen.</title>
        <authorList>
            <person name="Chain P.S.G."/>
            <person name="Hu P."/>
            <person name="Malfatti S.A."/>
            <person name="Radnedge L."/>
            <person name="Larimer F."/>
            <person name="Vergez L.M."/>
            <person name="Worsham P."/>
            <person name="Chu M.C."/>
            <person name="Andersen G.L."/>
        </authorList>
    </citation>
    <scope>NUCLEOTIDE SEQUENCE [LARGE SCALE GENOMIC DNA]</scope>
    <source>
        <strain>Nepal516</strain>
    </source>
</reference>
<reference key="2">
    <citation type="submission" date="2009-04" db="EMBL/GenBank/DDBJ databases">
        <title>Yersinia pestis Nepal516A whole genome shotgun sequencing project.</title>
        <authorList>
            <person name="Plunkett G. III"/>
            <person name="Anderson B.D."/>
            <person name="Baumler D.J."/>
            <person name="Burland V."/>
            <person name="Cabot E.L."/>
            <person name="Glasner J.D."/>
            <person name="Mau B."/>
            <person name="Neeno-Eckwall E."/>
            <person name="Perna N.T."/>
            <person name="Munk A.C."/>
            <person name="Tapia R."/>
            <person name="Green L.D."/>
            <person name="Rogers Y.C."/>
            <person name="Detter J.C."/>
            <person name="Bruce D.C."/>
            <person name="Brettin T.S."/>
        </authorList>
    </citation>
    <scope>NUCLEOTIDE SEQUENCE [LARGE SCALE GENOMIC DNA]</scope>
    <source>
        <strain>Nepal516</strain>
    </source>
</reference>
<proteinExistence type="inferred from homology"/>
<accession>Q1CEB5</accession>
<accession>C4GY56</accession>
<dbReference type="EMBL" id="CP000305">
    <property type="protein sequence ID" value="ABG19665.1"/>
    <property type="molecule type" value="Genomic_DNA"/>
</dbReference>
<dbReference type="EMBL" id="ACNQ01000017">
    <property type="protein sequence ID" value="EEO75856.1"/>
    <property type="molecule type" value="Genomic_DNA"/>
</dbReference>
<dbReference type="RefSeq" id="WP_002209108.1">
    <property type="nucleotide sequence ID" value="NZ_ACNQ01000017.1"/>
</dbReference>
<dbReference type="SMR" id="Q1CEB5"/>
<dbReference type="GeneID" id="57974273"/>
<dbReference type="KEGG" id="ypn:YPN_3338"/>
<dbReference type="HOGENOM" id="CLU_000445_88_5_6"/>
<dbReference type="Proteomes" id="UP000008936">
    <property type="component" value="Chromosome"/>
</dbReference>
<dbReference type="GO" id="GO:0005737">
    <property type="term" value="C:cytoplasm"/>
    <property type="evidence" value="ECO:0007669"/>
    <property type="project" value="UniProtKB-SubCell"/>
</dbReference>
<dbReference type="GO" id="GO:0003700">
    <property type="term" value="F:DNA-binding transcription factor activity"/>
    <property type="evidence" value="ECO:0007669"/>
    <property type="project" value="UniProtKB-UniRule"/>
</dbReference>
<dbReference type="GO" id="GO:0043565">
    <property type="term" value="F:sequence-specific DNA binding"/>
    <property type="evidence" value="ECO:0007669"/>
    <property type="project" value="InterPro"/>
</dbReference>
<dbReference type="GO" id="GO:0045893">
    <property type="term" value="P:positive regulation of DNA-templated transcription"/>
    <property type="evidence" value="ECO:0007669"/>
    <property type="project" value="UniProtKB-UniRule"/>
</dbReference>
<dbReference type="GO" id="GO:0019299">
    <property type="term" value="P:rhamnose metabolic process"/>
    <property type="evidence" value="ECO:0007669"/>
    <property type="project" value="UniProtKB-UniRule"/>
</dbReference>
<dbReference type="CDD" id="cd06977">
    <property type="entry name" value="cupin_RhaR_RhaS-like_N"/>
    <property type="match status" value="1"/>
</dbReference>
<dbReference type="Gene3D" id="1.10.10.60">
    <property type="entry name" value="Homeodomain-like"/>
    <property type="match status" value="1"/>
</dbReference>
<dbReference type="Gene3D" id="2.60.120.10">
    <property type="entry name" value="Jelly Rolls"/>
    <property type="match status" value="1"/>
</dbReference>
<dbReference type="HAMAP" id="MF_01534">
    <property type="entry name" value="HTH_type_RhaS"/>
    <property type="match status" value="1"/>
</dbReference>
<dbReference type="InterPro" id="IPR003313">
    <property type="entry name" value="AraC-bd"/>
</dbReference>
<dbReference type="InterPro" id="IPR050204">
    <property type="entry name" value="AraC_XylS_family_regulators"/>
</dbReference>
<dbReference type="InterPro" id="IPR009057">
    <property type="entry name" value="Homeodomain-like_sf"/>
</dbReference>
<dbReference type="InterPro" id="IPR037923">
    <property type="entry name" value="HTH-like"/>
</dbReference>
<dbReference type="InterPro" id="IPR018060">
    <property type="entry name" value="HTH_AraC"/>
</dbReference>
<dbReference type="InterPro" id="IPR047220">
    <property type="entry name" value="RhaR_RhaS-like_N"/>
</dbReference>
<dbReference type="InterPro" id="IPR014710">
    <property type="entry name" value="RmlC-like_jellyroll"/>
</dbReference>
<dbReference type="InterPro" id="IPR020449">
    <property type="entry name" value="Tscrpt_reg_AraC-type_HTH"/>
</dbReference>
<dbReference type="InterPro" id="IPR023609">
    <property type="entry name" value="Tscrpt_reg_HTH_RhaS"/>
</dbReference>
<dbReference type="NCBIfam" id="NF010028">
    <property type="entry name" value="PRK13503.1"/>
    <property type="match status" value="1"/>
</dbReference>
<dbReference type="PANTHER" id="PTHR46796:SF13">
    <property type="entry name" value="HTH-TYPE TRANSCRIPTIONAL ACTIVATOR RHAS"/>
    <property type="match status" value="1"/>
</dbReference>
<dbReference type="PANTHER" id="PTHR46796">
    <property type="entry name" value="HTH-TYPE TRANSCRIPTIONAL ACTIVATOR RHAS-RELATED"/>
    <property type="match status" value="1"/>
</dbReference>
<dbReference type="Pfam" id="PF02311">
    <property type="entry name" value="AraC_binding"/>
    <property type="match status" value="1"/>
</dbReference>
<dbReference type="Pfam" id="PF12833">
    <property type="entry name" value="HTH_18"/>
    <property type="match status" value="1"/>
</dbReference>
<dbReference type="PRINTS" id="PR00032">
    <property type="entry name" value="HTHARAC"/>
</dbReference>
<dbReference type="SMART" id="SM00342">
    <property type="entry name" value="HTH_ARAC"/>
    <property type="match status" value="1"/>
</dbReference>
<dbReference type="SUPFAM" id="SSF46689">
    <property type="entry name" value="Homeodomain-like"/>
    <property type="match status" value="2"/>
</dbReference>
<dbReference type="SUPFAM" id="SSF51215">
    <property type="entry name" value="Regulatory protein AraC"/>
    <property type="match status" value="1"/>
</dbReference>
<dbReference type="PROSITE" id="PS01124">
    <property type="entry name" value="HTH_ARAC_FAMILY_2"/>
    <property type="match status" value="1"/>
</dbReference>
<feature type="chain" id="PRO_1000068713" description="HTH-type transcriptional activator RhaS">
    <location>
        <begin position="1"/>
        <end position="273"/>
    </location>
</feature>
<feature type="domain" description="HTH araC/xylS-type" evidence="1">
    <location>
        <begin position="174"/>
        <end position="272"/>
    </location>
</feature>
<feature type="DNA-binding region" description="H-T-H motif" evidence="1">
    <location>
        <begin position="191"/>
        <end position="212"/>
    </location>
</feature>
<feature type="DNA-binding region" description="H-T-H motif" evidence="1">
    <location>
        <begin position="239"/>
        <end position="262"/>
    </location>
</feature>
<feature type="site" description="Interaction with sigma-70" evidence="1">
    <location>
        <position position="241"/>
    </location>
</feature>
<feature type="site" description="Interaction with sigma-70" evidence="1">
    <location>
        <position position="250"/>
    </location>
</feature>
<name>RHAS_YERPN</name>
<protein>
    <recommendedName>
        <fullName evidence="1">HTH-type transcriptional activator RhaS</fullName>
    </recommendedName>
    <alternativeName>
        <fullName evidence="1">L-rhamnose operon regulatory protein RhaS</fullName>
    </alternativeName>
</protein>
<gene>
    <name evidence="1" type="primary">rhaS</name>
    <name type="ordered locus">YPN_3338</name>
    <name type="ORF">YP516_3795</name>
</gene>
<keyword id="KW-0010">Activator</keyword>
<keyword id="KW-0963">Cytoplasm</keyword>
<keyword id="KW-0238">DNA-binding</keyword>
<keyword id="KW-0677">Repeat</keyword>
<keyword id="KW-0684">Rhamnose metabolism</keyword>
<keyword id="KW-0804">Transcription</keyword>
<keyword id="KW-0805">Transcription regulation</keyword>
<organism>
    <name type="scientific">Yersinia pestis bv. Antiqua (strain Nepal516)</name>
    <dbReference type="NCBI Taxonomy" id="377628"/>
    <lineage>
        <taxon>Bacteria</taxon>
        <taxon>Pseudomonadati</taxon>
        <taxon>Pseudomonadota</taxon>
        <taxon>Gammaproteobacteria</taxon>
        <taxon>Enterobacterales</taxon>
        <taxon>Yersiniaceae</taxon>
        <taxon>Yersinia</taxon>
    </lineage>
</organism>
<sequence length="273" mass="31393">MTVLHSIDFFSSSSAPVAIEARAPQSAFPEHHHDFYEIVIVEEGAGVHVFNGNPYTLSRGCVCFVRDHDRHLFESTDDLFLTNVLFRAPDAFRFLSGVGHFLPRECDGVYPSHWRVNGQVLQQIKCLIACLEHAPKSDQVEDIALHESVFMQLLVKLWQGCQTQVGDDQEGRLYQLLDWLQNNYSEAVEWPELADRFALPLRTLHRQLKNKTGMTPQRYLTRLHLLQARHQLCYSDNSVTDIAYLCGFGDSNHFSTLFKREFSQSPRDLRSQL</sequence>
<comment type="function">
    <text evidence="1">Activates expression of the rhaBAD and rhaT operons.</text>
</comment>
<comment type="subunit">
    <text evidence="1">Binds DNA as a dimer.</text>
</comment>
<comment type="subcellular location">
    <subcellularLocation>
        <location evidence="1">Cytoplasm</location>
    </subcellularLocation>
</comment>
<evidence type="ECO:0000255" key="1">
    <source>
        <dbReference type="HAMAP-Rule" id="MF_01534"/>
    </source>
</evidence>